<gene>
    <name type="primary">MT1A</name>
    <name type="synonym">MT1</name>
</gene>
<comment type="function">
    <text>Metallothioneins have a high content of cysteine residues that bind various heavy metals; these proteins are transcriptionally regulated by both heavy metals and glucocorticoids.</text>
</comment>
<comment type="subunit">
    <text>Monomer.</text>
</comment>
<comment type="domain">
    <text>Class I metallothioneins contain 2 metal-binding domains: four divalent ions are chelated within cluster A of the alpha domain and are coordinated via cysteinyl thiolate bridges to 11 cysteine ligands. Cluster B, the corresponding region within the beta domain, can ligate three divalent ions to 9 cysteines.</text>
</comment>
<comment type="similarity">
    <text evidence="3">Belongs to the metallothionein superfamily. Type 1 family.</text>
</comment>
<feature type="chain" id="PRO_0000197208" description="Metallothionein-1A">
    <location>
        <begin position="1"/>
        <end position="61"/>
    </location>
</feature>
<feature type="region of interest" description="Beta">
    <location>
        <begin position="1"/>
        <end position="29"/>
    </location>
</feature>
<feature type="region of interest" description="Alpha">
    <location>
        <begin position="30"/>
        <end position="61"/>
    </location>
</feature>
<feature type="binding site" evidence="1">
    <location>
        <position position="5"/>
    </location>
    <ligand>
        <name>a divalent metal cation</name>
        <dbReference type="ChEBI" id="CHEBI:60240"/>
        <label>1</label>
        <note>in cluster B</note>
    </ligand>
</feature>
<feature type="binding site" evidence="1">
    <location>
        <position position="7"/>
    </location>
    <ligand>
        <name>a divalent metal cation</name>
        <dbReference type="ChEBI" id="CHEBI:60240"/>
        <label>1</label>
        <note>in cluster B</note>
    </ligand>
</feature>
<feature type="binding site" evidence="1">
    <location>
        <position position="7"/>
    </location>
    <ligand>
        <name>a divalent metal cation</name>
        <dbReference type="ChEBI" id="CHEBI:60240"/>
        <label>2</label>
        <note>in cluster B</note>
    </ligand>
</feature>
<feature type="binding site" evidence="1">
    <location>
        <position position="13"/>
    </location>
    <ligand>
        <name>a divalent metal cation</name>
        <dbReference type="ChEBI" id="CHEBI:60240"/>
        <label>2</label>
        <note>in cluster B</note>
    </ligand>
</feature>
<feature type="binding site" evidence="1">
    <location>
        <position position="15"/>
    </location>
    <ligand>
        <name>a divalent metal cation</name>
        <dbReference type="ChEBI" id="CHEBI:60240"/>
        <label>2</label>
        <note>in cluster B</note>
    </ligand>
</feature>
<feature type="binding site" evidence="1">
    <location>
        <position position="15"/>
    </location>
    <ligand>
        <name>a divalent metal cation</name>
        <dbReference type="ChEBI" id="CHEBI:60240"/>
        <label>3</label>
        <note>in cluster B</note>
    </ligand>
</feature>
<feature type="binding site" evidence="1">
    <location>
        <position position="19"/>
    </location>
    <ligand>
        <name>a divalent metal cation</name>
        <dbReference type="ChEBI" id="CHEBI:60240"/>
        <label>3</label>
        <note>in cluster B</note>
    </ligand>
</feature>
<feature type="binding site" evidence="1">
    <location>
        <position position="21"/>
    </location>
    <ligand>
        <name>a divalent metal cation</name>
        <dbReference type="ChEBI" id="CHEBI:60240"/>
        <label>1</label>
        <note>in cluster B</note>
    </ligand>
</feature>
<feature type="binding site" evidence="1">
    <location>
        <position position="24"/>
    </location>
    <ligand>
        <name>a divalent metal cation</name>
        <dbReference type="ChEBI" id="CHEBI:60240"/>
        <label>1</label>
        <note>in cluster B</note>
    </ligand>
</feature>
<feature type="binding site" evidence="1">
    <location>
        <position position="24"/>
    </location>
    <ligand>
        <name>a divalent metal cation</name>
        <dbReference type="ChEBI" id="CHEBI:60240"/>
        <label>3</label>
        <note>in cluster B</note>
    </ligand>
</feature>
<feature type="binding site" evidence="1">
    <location>
        <position position="26"/>
    </location>
    <ligand>
        <name>a divalent metal cation</name>
        <dbReference type="ChEBI" id="CHEBI:60240"/>
        <label>2</label>
        <note>in cluster B</note>
    </ligand>
</feature>
<feature type="binding site" evidence="1">
    <location>
        <position position="29"/>
    </location>
    <ligand>
        <name>a divalent metal cation</name>
        <dbReference type="ChEBI" id="CHEBI:60240"/>
        <label>3</label>
        <note>in cluster B</note>
    </ligand>
</feature>
<feature type="binding site" evidence="1">
    <location>
        <position position="33"/>
    </location>
    <ligand>
        <name>a divalent metal cation</name>
        <dbReference type="ChEBI" id="CHEBI:60240"/>
        <label>4</label>
        <note>in cluster A</note>
    </ligand>
</feature>
<feature type="binding site" evidence="1">
    <location>
        <position position="34"/>
    </location>
    <ligand>
        <name>a divalent metal cation</name>
        <dbReference type="ChEBI" id="CHEBI:60240"/>
        <label>4</label>
        <note>in cluster A</note>
    </ligand>
</feature>
<feature type="binding site" evidence="1">
    <location>
        <position position="34"/>
    </location>
    <ligand>
        <name>a divalent metal cation</name>
        <dbReference type="ChEBI" id="CHEBI:60240"/>
        <label>5</label>
        <note>in cluster A</note>
    </ligand>
</feature>
<feature type="binding site" evidence="1">
    <location>
        <position position="36"/>
    </location>
    <ligand>
        <name>a divalent metal cation</name>
        <dbReference type="ChEBI" id="CHEBI:60240"/>
        <label>5</label>
        <note>in cluster A</note>
    </ligand>
</feature>
<feature type="binding site" evidence="1">
    <location>
        <position position="37"/>
    </location>
    <ligand>
        <name>a divalent metal cation</name>
        <dbReference type="ChEBI" id="CHEBI:60240"/>
        <label>5</label>
        <note>in cluster A</note>
    </ligand>
</feature>
<feature type="binding site" evidence="1">
    <location>
        <position position="37"/>
    </location>
    <ligand>
        <name>a divalent metal cation</name>
        <dbReference type="ChEBI" id="CHEBI:60240"/>
        <label>6</label>
        <note>in cluster A</note>
    </ligand>
</feature>
<feature type="binding site" evidence="1">
    <location>
        <position position="41"/>
    </location>
    <ligand>
        <name>a divalent metal cation</name>
        <dbReference type="ChEBI" id="CHEBI:60240"/>
        <label>6</label>
        <note>in cluster A</note>
    </ligand>
</feature>
<feature type="binding site" evidence="1">
    <location>
        <position position="44"/>
    </location>
    <ligand>
        <name>a divalent metal cation</name>
        <dbReference type="ChEBI" id="CHEBI:60240"/>
        <label>4</label>
        <note>in cluster A</note>
    </ligand>
</feature>
<feature type="binding site" evidence="1">
    <location>
        <position position="44"/>
    </location>
    <ligand>
        <name>a divalent metal cation</name>
        <dbReference type="ChEBI" id="CHEBI:60240"/>
        <label>6</label>
        <note>in cluster A</note>
    </ligand>
</feature>
<feature type="binding site" evidence="1">
    <location>
        <position position="48"/>
    </location>
    <ligand>
        <name>a divalent metal cation</name>
        <dbReference type="ChEBI" id="CHEBI:60240"/>
        <label>4</label>
        <note>in cluster A</note>
    </ligand>
</feature>
<feature type="binding site" evidence="1">
    <location>
        <position position="50"/>
    </location>
    <ligand>
        <name>a divalent metal cation</name>
        <dbReference type="ChEBI" id="CHEBI:60240"/>
        <label>5</label>
        <note>in cluster A</note>
    </ligand>
</feature>
<feature type="binding site" evidence="1">
    <location>
        <position position="50"/>
    </location>
    <ligand>
        <name>a divalent metal cation</name>
        <dbReference type="ChEBI" id="CHEBI:60240"/>
        <label>7</label>
        <note>in cluster A</note>
    </ligand>
</feature>
<feature type="binding site" evidence="1">
    <location>
        <position position="57"/>
    </location>
    <ligand>
        <name>a divalent metal cation</name>
        <dbReference type="ChEBI" id="CHEBI:60240"/>
        <label>7</label>
        <note>in cluster A</note>
    </ligand>
</feature>
<feature type="binding site" evidence="1">
    <location>
        <position position="59"/>
    </location>
    <ligand>
        <name>a divalent metal cation</name>
        <dbReference type="ChEBI" id="CHEBI:60240"/>
        <label>7</label>
        <note>in cluster A</note>
    </ligand>
</feature>
<feature type="binding site" evidence="1">
    <location>
        <position position="60"/>
    </location>
    <ligand>
        <name>a divalent metal cation</name>
        <dbReference type="ChEBI" id="CHEBI:60240"/>
        <label>6</label>
        <note>in cluster A</note>
    </ligand>
</feature>
<feature type="binding site" evidence="1">
    <location>
        <position position="60"/>
    </location>
    <ligand>
        <name>a divalent metal cation</name>
        <dbReference type="ChEBI" id="CHEBI:60240"/>
        <label>7</label>
        <note>in cluster A</note>
    </ligand>
</feature>
<feature type="modified residue" description="N-acetylmethionine" evidence="2">
    <location>
        <position position="1"/>
    </location>
</feature>
<feature type="modified residue" description="Phosphoserine" evidence="1">
    <location>
        <position position="58"/>
    </location>
</feature>
<feature type="sequence conflict" description="In Ref. 2; BAA19177." evidence="3" ref="2">
    <original>C</original>
    <variation>R</variation>
    <location>
        <position position="13"/>
    </location>
</feature>
<organism>
    <name type="scientific">Sus scrofa</name>
    <name type="common">Pig</name>
    <dbReference type="NCBI Taxonomy" id="9823"/>
    <lineage>
        <taxon>Eukaryota</taxon>
        <taxon>Metazoa</taxon>
        <taxon>Chordata</taxon>
        <taxon>Craniata</taxon>
        <taxon>Vertebrata</taxon>
        <taxon>Euteleostomi</taxon>
        <taxon>Mammalia</taxon>
        <taxon>Eutheria</taxon>
        <taxon>Laurasiatheria</taxon>
        <taxon>Artiodactyla</taxon>
        <taxon>Suina</taxon>
        <taxon>Suidae</taxon>
        <taxon>Sus</taxon>
    </lineage>
</organism>
<protein>
    <recommendedName>
        <fullName>Metallothionein-1A</fullName>
        <shortName>MT-1A</shortName>
    </recommendedName>
    <alternativeName>
        <fullName>Metallothionein-IA</fullName>
        <shortName>MT-IA</shortName>
    </alternativeName>
</protein>
<name>MT1A_PIG</name>
<evidence type="ECO:0000250" key="1">
    <source>
        <dbReference type="UniProtKB" id="P02795"/>
    </source>
</evidence>
<evidence type="ECO:0000250" key="2">
    <source>
        <dbReference type="UniProtKB" id="P11957"/>
    </source>
</evidence>
<evidence type="ECO:0000305" key="3"/>
<keyword id="KW-0007">Acetylation</keyword>
<keyword id="KW-0479">Metal-binding</keyword>
<keyword id="KW-0480">Metal-thiolate cluster</keyword>
<keyword id="KW-0597">Phosphoprotein</keyword>
<keyword id="KW-1185">Reference proteome</keyword>
<accession>P49068</accession>
<accession>P79375</accession>
<reference key="1">
    <citation type="journal article" date="1989" name="Surgery">
        <title>Change in hepatic gene expression after shock/resuscitation.</title>
        <authorList>
            <person name="Buchman T.G."/>
            <person name="Cabin D.E."/>
            <person name="Porter J.M."/>
            <person name="Bulkley G.B."/>
        </authorList>
    </citation>
    <scope>NUCLEOTIDE SEQUENCE [MRNA]</scope>
</reference>
<reference key="2">
    <citation type="journal article" date="1998" name="Gene">
        <title>Multiple isoforms of metallothionein are expressed in the porcine liver.</title>
        <authorList>
            <person name="Huang M.-C."/>
            <person name="Pan P.K."/>
            <person name="Zheng T.F."/>
            <person name="Chen N.C."/>
            <person name="Peng J.Y."/>
            <person name="Huang P.C."/>
        </authorList>
    </citation>
    <scope>NUCLEOTIDE SEQUENCE [MRNA]</scope>
    <source>
        <tissue>Liver</tissue>
    </source>
</reference>
<dbReference type="EMBL" id="M29515">
    <property type="protein sequence ID" value="AAA02939.1"/>
    <property type="molecule type" value="mRNA"/>
</dbReference>
<dbReference type="EMBL" id="AB000786">
    <property type="protein sequence ID" value="BAA19176.1"/>
    <property type="molecule type" value="mRNA"/>
</dbReference>
<dbReference type="EMBL" id="AB000787">
    <property type="protein sequence ID" value="BAA19177.1"/>
    <property type="molecule type" value="mRNA"/>
</dbReference>
<dbReference type="PIR" id="I46602">
    <property type="entry name" value="I46602"/>
</dbReference>
<dbReference type="RefSeq" id="NP_001001266.1">
    <property type="nucleotide sequence ID" value="NM_001001266.2"/>
</dbReference>
<dbReference type="SMR" id="P49068"/>
<dbReference type="FunCoup" id="P49068">
    <property type="interactions" value="130"/>
</dbReference>
<dbReference type="STRING" id="9823.ENSSSCP00000025883"/>
<dbReference type="PeptideAtlas" id="P49068"/>
<dbReference type="Ensembl" id="ENSSSCT00000036829.3">
    <property type="protein sequence ID" value="ENSSSCP00000051123.1"/>
    <property type="gene ID" value="ENSSSCG00000061081.1"/>
</dbReference>
<dbReference type="Ensembl" id="ENSSSCT00025104329.1">
    <property type="protein sequence ID" value="ENSSSCP00025046362.1"/>
    <property type="gene ID" value="ENSSSCG00025075608.1"/>
</dbReference>
<dbReference type="Ensembl" id="ENSSSCT00025104353.1">
    <property type="protein sequence ID" value="ENSSSCP00025046376.1"/>
    <property type="gene ID" value="ENSSSCG00025075608.1"/>
</dbReference>
<dbReference type="Ensembl" id="ENSSSCT00060101036.1">
    <property type="protein sequence ID" value="ENSSSCP00060043894.1"/>
    <property type="gene ID" value="ENSSSCG00060073787.1"/>
</dbReference>
<dbReference type="Ensembl" id="ENSSSCT00060101141.1">
    <property type="protein sequence ID" value="ENSSSCP00060043937.1"/>
    <property type="gene ID" value="ENSSSCG00060073787.1"/>
</dbReference>
<dbReference type="GeneID" id="397417"/>
<dbReference type="KEGG" id="ssc:397417"/>
<dbReference type="CTD" id="4489"/>
<dbReference type="eggNOG" id="KOG4738">
    <property type="taxonomic scope" value="Eukaryota"/>
</dbReference>
<dbReference type="GeneTree" id="ENSGT00950000182967"/>
<dbReference type="InParanoid" id="P49068"/>
<dbReference type="Reactome" id="R-SSC-5661231">
    <property type="pathway name" value="Metallothioneins bind metals"/>
</dbReference>
<dbReference type="Proteomes" id="UP000008227">
    <property type="component" value="Chromosome 6"/>
</dbReference>
<dbReference type="Proteomes" id="UP000314985">
    <property type="component" value="Unplaced"/>
</dbReference>
<dbReference type="Proteomes" id="UP000694570">
    <property type="component" value="Unplaced"/>
</dbReference>
<dbReference type="Proteomes" id="UP000694571">
    <property type="component" value="Unplaced"/>
</dbReference>
<dbReference type="Proteomes" id="UP000694720">
    <property type="component" value="Unplaced"/>
</dbReference>
<dbReference type="Proteomes" id="UP000694722">
    <property type="component" value="Unplaced"/>
</dbReference>
<dbReference type="Proteomes" id="UP000694723">
    <property type="component" value="Unplaced"/>
</dbReference>
<dbReference type="Proteomes" id="UP000694724">
    <property type="component" value="Unplaced"/>
</dbReference>
<dbReference type="Proteomes" id="UP000694725">
    <property type="component" value="Unplaced"/>
</dbReference>
<dbReference type="Proteomes" id="UP000694726">
    <property type="component" value="Unplaced"/>
</dbReference>
<dbReference type="Proteomes" id="UP000694727">
    <property type="component" value="Unplaced"/>
</dbReference>
<dbReference type="Proteomes" id="UP000694728">
    <property type="component" value="Unplaced"/>
</dbReference>
<dbReference type="Bgee" id="ENSSSCG00000023684">
    <property type="expression patterns" value="Expressed in right lobe of liver and 45 other cell types or tissues"/>
</dbReference>
<dbReference type="ExpressionAtlas" id="P49068">
    <property type="expression patterns" value="baseline and differential"/>
</dbReference>
<dbReference type="GO" id="GO:0005737">
    <property type="term" value="C:cytoplasm"/>
    <property type="evidence" value="ECO:0000250"/>
    <property type="project" value="UniProtKB"/>
</dbReference>
<dbReference type="GO" id="GO:0005634">
    <property type="term" value="C:nucleus"/>
    <property type="evidence" value="ECO:0000250"/>
    <property type="project" value="UniProtKB"/>
</dbReference>
<dbReference type="GO" id="GO:0046872">
    <property type="term" value="F:metal ion binding"/>
    <property type="evidence" value="ECO:0000318"/>
    <property type="project" value="GO_Central"/>
</dbReference>
<dbReference type="GO" id="GO:0008270">
    <property type="term" value="F:zinc ion binding"/>
    <property type="evidence" value="ECO:0000250"/>
    <property type="project" value="UniProtKB"/>
</dbReference>
<dbReference type="GO" id="GO:0071276">
    <property type="term" value="P:cellular response to cadmium ion"/>
    <property type="evidence" value="ECO:0000318"/>
    <property type="project" value="GO_Central"/>
</dbReference>
<dbReference type="GO" id="GO:0071280">
    <property type="term" value="P:cellular response to copper ion"/>
    <property type="evidence" value="ECO:0000318"/>
    <property type="project" value="GO_Central"/>
</dbReference>
<dbReference type="GO" id="GO:0071294">
    <property type="term" value="P:cellular response to zinc ion"/>
    <property type="evidence" value="ECO:0000250"/>
    <property type="project" value="UniProtKB"/>
</dbReference>
<dbReference type="GO" id="GO:0010273">
    <property type="term" value="P:detoxification of copper ion"/>
    <property type="evidence" value="ECO:0000318"/>
    <property type="project" value="GO_Central"/>
</dbReference>
<dbReference type="GO" id="GO:0006882">
    <property type="term" value="P:intracellular zinc ion homeostasis"/>
    <property type="evidence" value="ECO:0000318"/>
    <property type="project" value="GO_Central"/>
</dbReference>
<dbReference type="GO" id="GO:0045926">
    <property type="term" value="P:negative regulation of growth"/>
    <property type="evidence" value="ECO:0000250"/>
    <property type="project" value="UniProtKB"/>
</dbReference>
<dbReference type="FunFam" id="4.10.10.10:FF:000001">
    <property type="entry name" value="Metallothionein"/>
    <property type="match status" value="1"/>
</dbReference>
<dbReference type="Gene3D" id="4.10.10.10">
    <property type="entry name" value="Metallothionein Isoform II"/>
    <property type="match status" value="1"/>
</dbReference>
<dbReference type="InterPro" id="IPR017854">
    <property type="entry name" value="Metalthion_dom_sf"/>
</dbReference>
<dbReference type="InterPro" id="IPR023587">
    <property type="entry name" value="Metalthion_dom_sf_vert"/>
</dbReference>
<dbReference type="InterPro" id="IPR000006">
    <property type="entry name" value="Metalthion_vert"/>
</dbReference>
<dbReference type="InterPro" id="IPR018064">
    <property type="entry name" value="Metalthion_vert_metal_BS"/>
</dbReference>
<dbReference type="PANTHER" id="PTHR23299">
    <property type="entry name" value="METALLOTHIONEIN"/>
    <property type="match status" value="1"/>
</dbReference>
<dbReference type="PANTHER" id="PTHR23299:SF22">
    <property type="entry name" value="METALLOTHIONEIN-1G"/>
    <property type="match status" value="1"/>
</dbReference>
<dbReference type="Pfam" id="PF00131">
    <property type="entry name" value="Metallothio"/>
    <property type="match status" value="1"/>
</dbReference>
<dbReference type="PRINTS" id="PR00860">
    <property type="entry name" value="MTVERTEBRATE"/>
</dbReference>
<dbReference type="SUPFAM" id="SSF57868">
    <property type="entry name" value="Metallothionein"/>
    <property type="match status" value="1"/>
</dbReference>
<dbReference type="PROSITE" id="PS00203">
    <property type="entry name" value="METALLOTHIONEIN_VRT"/>
    <property type="match status" value="1"/>
</dbReference>
<sequence>MDPNCSCPTGGSCSCAGSCTCKACRCTSCKKSCCSCCPAGCARCAQGCICKGASDKCSCCA</sequence>
<proteinExistence type="inferred from homology"/>